<reference key="1">
    <citation type="submission" date="2003-03" db="EMBL/GenBank/DDBJ databases">
        <title>African swine fever virus genomes.</title>
        <authorList>
            <person name="Kutish G.F."/>
            <person name="Rock D.L."/>
        </authorList>
    </citation>
    <scope>NUCLEOTIDE SEQUENCE [GENOMIC DNA]</scope>
</reference>
<feature type="chain" id="PRO_0000373759" description="Uncharacterized protein D129L">
    <location>
        <begin position="1"/>
        <end position="129"/>
    </location>
</feature>
<feature type="region of interest" description="Disordered" evidence="1">
    <location>
        <begin position="86"/>
        <end position="129"/>
    </location>
</feature>
<feature type="compositionally biased region" description="Acidic residues" evidence="1">
    <location>
        <begin position="86"/>
        <end position="96"/>
    </location>
</feature>
<feature type="compositionally biased region" description="Polar residues" evidence="1">
    <location>
        <begin position="103"/>
        <end position="117"/>
    </location>
</feature>
<evidence type="ECO:0000256" key="1">
    <source>
        <dbReference type="SAM" id="MobiDB-lite"/>
    </source>
</evidence>
<evidence type="ECO:0000305" key="2"/>
<organism>
    <name type="scientific">African swine fever virus (isolate Tick/South Africa/Pretoriuskop Pr4/1996)</name>
    <name type="common">ASFV</name>
    <dbReference type="NCBI Taxonomy" id="561443"/>
    <lineage>
        <taxon>Viruses</taxon>
        <taxon>Varidnaviria</taxon>
        <taxon>Bamfordvirae</taxon>
        <taxon>Nucleocytoviricota</taxon>
        <taxon>Pokkesviricetes</taxon>
        <taxon>Asfuvirales</taxon>
        <taxon>Asfarviridae</taxon>
        <taxon>Asfivirus</taxon>
        <taxon>African swine fever virus</taxon>
    </lineage>
</organism>
<protein>
    <recommendedName>
        <fullName>Uncharacterized protein D129L</fullName>
        <shortName>pD129L</shortName>
    </recommendedName>
</protein>
<proteinExistence type="inferred from homology"/>
<dbReference type="EMBL" id="AY261363">
    <property type="status" value="NOT_ANNOTATED_CDS"/>
    <property type="molecule type" value="Genomic_DNA"/>
</dbReference>
<dbReference type="Proteomes" id="UP000000859">
    <property type="component" value="Segment"/>
</dbReference>
<sequence>MDINPLLYLQAFNNDATTFNTQGHILEQQSDSPYFDTFANAMQAYLDTKQGGNDEEGTIILMDDEDFNDSESLEDFLQMLNEEELNDGFSSDDEPEEHVILTEDNQGEPSETPQATFDITEFIKTEDED</sequence>
<comment type="similarity">
    <text evidence="2">Belongs to the asfivirus D129L family.</text>
</comment>
<organismHost>
    <name type="scientific">Ornithodoros</name>
    <name type="common">relapsing fever ticks</name>
    <dbReference type="NCBI Taxonomy" id="6937"/>
</organismHost>
<organismHost>
    <name type="scientific">Phacochoerus aethiopicus</name>
    <name type="common">Warthog</name>
    <dbReference type="NCBI Taxonomy" id="85517"/>
</organismHost>
<organismHost>
    <name type="scientific">Phacochoerus africanus</name>
    <name type="common">Warthog</name>
    <dbReference type="NCBI Taxonomy" id="41426"/>
</organismHost>
<organismHost>
    <name type="scientific">Potamochoerus larvatus</name>
    <name type="common">Bushpig</name>
    <dbReference type="NCBI Taxonomy" id="273792"/>
</organismHost>
<organismHost>
    <name type="scientific">Sus scrofa</name>
    <name type="common">Pig</name>
    <dbReference type="NCBI Taxonomy" id="9823"/>
</organismHost>
<name>VFD29_ASFP4</name>
<gene>
    <name type="ordered locus">Pret-115</name>
</gene>
<accession>P0CAM5</accession>